<feature type="chain" id="PRO_0000172869" description="Septation ring formation regulator EzrA">
    <location>
        <begin position="1"/>
        <end position="561"/>
    </location>
</feature>
<feature type="topological domain" description="Extracellular" evidence="1">
    <location>
        <begin position="1"/>
        <end position="3"/>
    </location>
</feature>
<feature type="transmembrane region" description="Helical" evidence="1">
    <location>
        <begin position="4"/>
        <end position="22"/>
    </location>
</feature>
<feature type="topological domain" description="Cytoplasmic" evidence="1">
    <location>
        <begin position="23"/>
        <end position="561"/>
    </location>
</feature>
<feature type="coiled-coil region" evidence="1">
    <location>
        <begin position="98"/>
        <end position="130"/>
    </location>
</feature>
<feature type="coiled-coil region" evidence="1">
    <location>
        <begin position="166"/>
        <end position="214"/>
    </location>
</feature>
<feature type="coiled-coil region" evidence="1">
    <location>
        <begin position="251"/>
        <end position="465"/>
    </location>
</feature>
<gene>
    <name evidence="1" type="primary">ezrA</name>
    <name type="ordered locus">BH3205</name>
</gene>
<accession>Q9K802</accession>
<protein>
    <recommendedName>
        <fullName evidence="1">Septation ring formation regulator EzrA</fullName>
    </recommendedName>
</protein>
<reference key="1">
    <citation type="journal article" date="2000" name="Nucleic Acids Res.">
        <title>Complete genome sequence of the alkaliphilic bacterium Bacillus halodurans and genomic sequence comparison with Bacillus subtilis.</title>
        <authorList>
            <person name="Takami H."/>
            <person name="Nakasone K."/>
            <person name="Takaki Y."/>
            <person name="Maeno G."/>
            <person name="Sasaki R."/>
            <person name="Masui N."/>
            <person name="Fuji F."/>
            <person name="Hirama C."/>
            <person name="Nakamura Y."/>
            <person name="Ogasawara N."/>
            <person name="Kuhara S."/>
            <person name="Horikoshi K."/>
        </authorList>
    </citation>
    <scope>NUCLEOTIDE SEQUENCE [LARGE SCALE GENOMIC DNA]</scope>
    <source>
        <strain>ATCC BAA-125 / DSM 18197 / FERM 7344 / JCM 9153 / C-125</strain>
    </source>
</reference>
<evidence type="ECO:0000255" key="1">
    <source>
        <dbReference type="HAMAP-Rule" id="MF_00728"/>
    </source>
</evidence>
<sequence>MWIVVFSLLVLTVTFFVYGALRRKAFYKRVDKLEDWKNDILQRPIPDEIGKVKGLTMSGETEEKFEVWRSDWDDIVGVILPNVEEQLFDVEDFANKYRFQKAKALLDTIEQRLHSIEEQLKIMVDDIQVLVQSEEQNRTEIGSVRELQQKLIKEAITRRGSLSSSAKVFDEKLEKANELLQAFDERTEKGNYIQASEVLEEAKELLGQIEHLLKIVPGLFVELQTNIPAELTNLKNGLRDMEEAGFFLETFAIDSQMERLEEKRVELLEQLTVLECNGMEEEINFIEESMEQMFELLEKEVEAKNEITILLPNLREDLTKTEEKLTHLKEETESVQLSYRLAEEELVFQQKLGKELKELRQQLQVIDEVTEEQKQTFSSVRSMLEEWREGLTACQNKIEQAQESLNSLRKDELKAKEELKQLKEKLLEDKRLVQKSNIPGLPETLLHRLEDGEQKLAQAIAKLSDVPLEMGRVTALVDEAQGLIHENSSILHETIEKARLAEHVIQYGNRYRSRSAEVKKRLSNAEELFRAFEYDEAIEMAVQAIEPFEKDVLEKVQHLAG</sequence>
<comment type="function">
    <text evidence="1">Negative regulator of FtsZ ring formation; modulates the frequency and position of FtsZ ring formation. Inhibits FtsZ ring formation at polar sites. Interacts either with FtsZ or with one of its binding partners to promote depolymerization.</text>
</comment>
<comment type="subcellular location">
    <subcellularLocation>
        <location>Cell membrane</location>
        <topology>Single-pass membrane protein</topology>
    </subcellularLocation>
    <text evidence="1">Colocalized with FtsZ to the nascent septal site.</text>
</comment>
<comment type="similarity">
    <text evidence="1">Belongs to the EzrA family.</text>
</comment>
<dbReference type="EMBL" id="BA000004">
    <property type="protein sequence ID" value="BAB06924.1"/>
    <property type="molecule type" value="Genomic_DNA"/>
</dbReference>
<dbReference type="PIR" id="E84050">
    <property type="entry name" value="E84050"/>
</dbReference>
<dbReference type="RefSeq" id="WP_010899348.1">
    <property type="nucleotide sequence ID" value="NC_002570.2"/>
</dbReference>
<dbReference type="SMR" id="Q9K802"/>
<dbReference type="STRING" id="272558.gene:10729117"/>
<dbReference type="KEGG" id="bha:BH3205"/>
<dbReference type="eggNOG" id="COG4477">
    <property type="taxonomic scope" value="Bacteria"/>
</dbReference>
<dbReference type="HOGENOM" id="CLU_034079_1_0_9"/>
<dbReference type="OrthoDB" id="1654473at2"/>
<dbReference type="Proteomes" id="UP000001258">
    <property type="component" value="Chromosome"/>
</dbReference>
<dbReference type="GO" id="GO:0005886">
    <property type="term" value="C:plasma membrane"/>
    <property type="evidence" value="ECO:0007669"/>
    <property type="project" value="UniProtKB-SubCell"/>
</dbReference>
<dbReference type="GO" id="GO:0005940">
    <property type="term" value="C:septin ring"/>
    <property type="evidence" value="ECO:0007669"/>
    <property type="project" value="InterPro"/>
</dbReference>
<dbReference type="GO" id="GO:0000917">
    <property type="term" value="P:division septum assembly"/>
    <property type="evidence" value="ECO:0007669"/>
    <property type="project" value="UniProtKB-KW"/>
</dbReference>
<dbReference type="GO" id="GO:0000921">
    <property type="term" value="P:septin ring assembly"/>
    <property type="evidence" value="ECO:0007669"/>
    <property type="project" value="InterPro"/>
</dbReference>
<dbReference type="HAMAP" id="MF_00728">
    <property type="entry name" value="EzrA"/>
    <property type="match status" value="1"/>
</dbReference>
<dbReference type="InterPro" id="IPR010379">
    <property type="entry name" value="EzrA"/>
</dbReference>
<dbReference type="NCBIfam" id="NF003413">
    <property type="entry name" value="PRK04778.1-7"/>
    <property type="match status" value="1"/>
</dbReference>
<dbReference type="Pfam" id="PF06160">
    <property type="entry name" value="EzrA"/>
    <property type="match status" value="1"/>
</dbReference>
<keyword id="KW-0131">Cell cycle</keyword>
<keyword id="KW-0132">Cell division</keyword>
<keyword id="KW-1003">Cell membrane</keyword>
<keyword id="KW-0175">Coiled coil</keyword>
<keyword id="KW-0472">Membrane</keyword>
<keyword id="KW-1185">Reference proteome</keyword>
<keyword id="KW-0717">Septation</keyword>
<keyword id="KW-0812">Transmembrane</keyword>
<keyword id="KW-1133">Transmembrane helix</keyword>
<proteinExistence type="inferred from homology"/>
<name>EZRA_HALH5</name>
<organism>
    <name type="scientific">Halalkalibacterium halodurans (strain ATCC BAA-125 / DSM 18197 / FERM 7344 / JCM 9153 / C-125)</name>
    <name type="common">Bacillus halodurans</name>
    <dbReference type="NCBI Taxonomy" id="272558"/>
    <lineage>
        <taxon>Bacteria</taxon>
        <taxon>Bacillati</taxon>
        <taxon>Bacillota</taxon>
        <taxon>Bacilli</taxon>
        <taxon>Bacillales</taxon>
        <taxon>Bacillaceae</taxon>
        <taxon>Halalkalibacterium (ex Joshi et al. 2022)</taxon>
    </lineage>
</organism>